<protein>
    <recommendedName>
        <fullName evidence="1">Large ribosomal subunit protein uL4</fullName>
    </recommendedName>
    <alternativeName>
        <fullName evidence="3">50S ribosomal protein L4</fullName>
    </alternativeName>
</protein>
<organism>
    <name type="scientific">Alkaliphilus oremlandii (strain OhILAs)</name>
    <name type="common">Clostridium oremlandii (strain OhILAs)</name>
    <dbReference type="NCBI Taxonomy" id="350688"/>
    <lineage>
        <taxon>Bacteria</taxon>
        <taxon>Bacillati</taxon>
        <taxon>Bacillota</taxon>
        <taxon>Clostridia</taxon>
        <taxon>Peptostreptococcales</taxon>
        <taxon>Natronincolaceae</taxon>
        <taxon>Alkaliphilus</taxon>
    </lineage>
</organism>
<sequence>MPKVAIYNVSGQQVSEIELSENVFGVEVNEHAMYEVVKNQLANRRQGTQSAKTRAEVRGGGRKPWKQKGTGRARVGSIRSPLWVGGGIVFAPKPRDYSYTIPKKVRRLALKSALTSKVNSNELIVLDELKLDAPKTKEMVNILKNLNVDKKALIVMGEKSEAVIKSANNIQGVQTALVNTINVYDILKYDKLIITKDAVQKVEEVYA</sequence>
<evidence type="ECO:0000255" key="1">
    <source>
        <dbReference type="HAMAP-Rule" id="MF_01328"/>
    </source>
</evidence>
<evidence type="ECO:0000256" key="2">
    <source>
        <dbReference type="SAM" id="MobiDB-lite"/>
    </source>
</evidence>
<evidence type="ECO:0000305" key="3"/>
<accession>A8MLE1</accession>
<feature type="chain" id="PRO_1000067590" description="Large ribosomal subunit protein uL4">
    <location>
        <begin position="1"/>
        <end position="207"/>
    </location>
</feature>
<feature type="region of interest" description="Disordered" evidence="2">
    <location>
        <begin position="44"/>
        <end position="71"/>
    </location>
</feature>
<feature type="compositionally biased region" description="Basic residues" evidence="2">
    <location>
        <begin position="60"/>
        <end position="71"/>
    </location>
</feature>
<comment type="function">
    <text evidence="1">One of the primary rRNA binding proteins, this protein initially binds near the 5'-end of the 23S rRNA. It is important during the early stages of 50S assembly. It makes multiple contacts with different domains of the 23S rRNA in the assembled 50S subunit and ribosome.</text>
</comment>
<comment type="function">
    <text evidence="1">Forms part of the polypeptide exit tunnel.</text>
</comment>
<comment type="subunit">
    <text evidence="1">Part of the 50S ribosomal subunit.</text>
</comment>
<comment type="similarity">
    <text evidence="1">Belongs to the universal ribosomal protein uL4 family.</text>
</comment>
<reference key="1">
    <citation type="submission" date="2007-10" db="EMBL/GenBank/DDBJ databases">
        <title>Complete genome of Alkaliphilus oremlandii OhILAs.</title>
        <authorList>
            <person name="Copeland A."/>
            <person name="Lucas S."/>
            <person name="Lapidus A."/>
            <person name="Barry K."/>
            <person name="Detter J.C."/>
            <person name="Glavina del Rio T."/>
            <person name="Hammon N."/>
            <person name="Israni S."/>
            <person name="Dalin E."/>
            <person name="Tice H."/>
            <person name="Pitluck S."/>
            <person name="Chain P."/>
            <person name="Malfatti S."/>
            <person name="Shin M."/>
            <person name="Vergez L."/>
            <person name="Schmutz J."/>
            <person name="Larimer F."/>
            <person name="Land M."/>
            <person name="Hauser L."/>
            <person name="Kyrpides N."/>
            <person name="Mikhailova N."/>
            <person name="Stolz J.F."/>
            <person name="Dawson A."/>
            <person name="Fisher E."/>
            <person name="Crable B."/>
            <person name="Perera E."/>
            <person name="Lisak J."/>
            <person name="Ranganathan M."/>
            <person name="Basu P."/>
            <person name="Richardson P."/>
        </authorList>
    </citation>
    <scope>NUCLEOTIDE SEQUENCE [LARGE SCALE GENOMIC DNA]</scope>
    <source>
        <strain>OhILAs</strain>
    </source>
</reference>
<dbReference type="EMBL" id="CP000853">
    <property type="protein sequence ID" value="ABW18055.1"/>
    <property type="molecule type" value="Genomic_DNA"/>
</dbReference>
<dbReference type="RefSeq" id="WP_012158369.1">
    <property type="nucleotide sequence ID" value="NC_009922.1"/>
</dbReference>
<dbReference type="SMR" id="A8MLE1"/>
<dbReference type="STRING" id="350688.Clos_0493"/>
<dbReference type="KEGG" id="aoe:Clos_0493"/>
<dbReference type="eggNOG" id="COG0088">
    <property type="taxonomic scope" value="Bacteria"/>
</dbReference>
<dbReference type="HOGENOM" id="CLU_041575_5_2_9"/>
<dbReference type="OrthoDB" id="9803201at2"/>
<dbReference type="Proteomes" id="UP000000269">
    <property type="component" value="Chromosome"/>
</dbReference>
<dbReference type="GO" id="GO:1990904">
    <property type="term" value="C:ribonucleoprotein complex"/>
    <property type="evidence" value="ECO:0007669"/>
    <property type="project" value="UniProtKB-KW"/>
</dbReference>
<dbReference type="GO" id="GO:0005840">
    <property type="term" value="C:ribosome"/>
    <property type="evidence" value="ECO:0007669"/>
    <property type="project" value="UniProtKB-KW"/>
</dbReference>
<dbReference type="GO" id="GO:0019843">
    <property type="term" value="F:rRNA binding"/>
    <property type="evidence" value="ECO:0007669"/>
    <property type="project" value="UniProtKB-UniRule"/>
</dbReference>
<dbReference type="GO" id="GO:0003735">
    <property type="term" value="F:structural constituent of ribosome"/>
    <property type="evidence" value="ECO:0007669"/>
    <property type="project" value="InterPro"/>
</dbReference>
<dbReference type="GO" id="GO:0006412">
    <property type="term" value="P:translation"/>
    <property type="evidence" value="ECO:0007669"/>
    <property type="project" value="UniProtKB-UniRule"/>
</dbReference>
<dbReference type="Gene3D" id="3.40.1370.10">
    <property type="match status" value="1"/>
</dbReference>
<dbReference type="HAMAP" id="MF_01328_B">
    <property type="entry name" value="Ribosomal_uL4_B"/>
    <property type="match status" value="1"/>
</dbReference>
<dbReference type="InterPro" id="IPR002136">
    <property type="entry name" value="Ribosomal_uL4"/>
</dbReference>
<dbReference type="InterPro" id="IPR013005">
    <property type="entry name" value="Ribosomal_uL4-like"/>
</dbReference>
<dbReference type="InterPro" id="IPR023574">
    <property type="entry name" value="Ribosomal_uL4_dom_sf"/>
</dbReference>
<dbReference type="NCBIfam" id="TIGR03953">
    <property type="entry name" value="rplD_bact"/>
    <property type="match status" value="1"/>
</dbReference>
<dbReference type="PANTHER" id="PTHR10746">
    <property type="entry name" value="50S RIBOSOMAL PROTEIN L4"/>
    <property type="match status" value="1"/>
</dbReference>
<dbReference type="PANTHER" id="PTHR10746:SF6">
    <property type="entry name" value="LARGE RIBOSOMAL SUBUNIT PROTEIN UL4M"/>
    <property type="match status" value="1"/>
</dbReference>
<dbReference type="Pfam" id="PF00573">
    <property type="entry name" value="Ribosomal_L4"/>
    <property type="match status" value="1"/>
</dbReference>
<dbReference type="SUPFAM" id="SSF52166">
    <property type="entry name" value="Ribosomal protein L4"/>
    <property type="match status" value="1"/>
</dbReference>
<keyword id="KW-1185">Reference proteome</keyword>
<keyword id="KW-0687">Ribonucleoprotein</keyword>
<keyword id="KW-0689">Ribosomal protein</keyword>
<keyword id="KW-0694">RNA-binding</keyword>
<keyword id="KW-0699">rRNA-binding</keyword>
<gene>
    <name evidence="1" type="primary">rplD</name>
    <name type="ordered locus">Clos_0493</name>
</gene>
<proteinExistence type="inferred from homology"/>
<name>RL4_ALKOO</name>